<accession>B2TQ23</accession>
<evidence type="ECO:0000255" key="1">
    <source>
        <dbReference type="HAMAP-Rule" id="MF_00005"/>
    </source>
</evidence>
<dbReference type="EC" id="6.3.4.5" evidence="1"/>
<dbReference type="EMBL" id="CP001056">
    <property type="protein sequence ID" value="ACD22097.1"/>
    <property type="molecule type" value="Genomic_DNA"/>
</dbReference>
<dbReference type="SMR" id="B2TQ23"/>
<dbReference type="KEGG" id="cbk:CLL_A3114"/>
<dbReference type="PATRIC" id="fig|935198.13.peg.3078"/>
<dbReference type="HOGENOM" id="CLU_032784_4_2_9"/>
<dbReference type="UniPathway" id="UPA00068">
    <property type="reaction ID" value="UER00113"/>
</dbReference>
<dbReference type="Proteomes" id="UP000001195">
    <property type="component" value="Chromosome"/>
</dbReference>
<dbReference type="GO" id="GO:0005737">
    <property type="term" value="C:cytoplasm"/>
    <property type="evidence" value="ECO:0007669"/>
    <property type="project" value="UniProtKB-SubCell"/>
</dbReference>
<dbReference type="GO" id="GO:0004055">
    <property type="term" value="F:argininosuccinate synthase activity"/>
    <property type="evidence" value="ECO:0007669"/>
    <property type="project" value="UniProtKB-UniRule"/>
</dbReference>
<dbReference type="GO" id="GO:0005524">
    <property type="term" value="F:ATP binding"/>
    <property type="evidence" value="ECO:0007669"/>
    <property type="project" value="UniProtKB-UniRule"/>
</dbReference>
<dbReference type="GO" id="GO:0000053">
    <property type="term" value="P:argininosuccinate metabolic process"/>
    <property type="evidence" value="ECO:0007669"/>
    <property type="project" value="TreeGrafter"/>
</dbReference>
<dbReference type="GO" id="GO:0006526">
    <property type="term" value="P:L-arginine biosynthetic process"/>
    <property type="evidence" value="ECO:0007669"/>
    <property type="project" value="UniProtKB-UniRule"/>
</dbReference>
<dbReference type="GO" id="GO:0000050">
    <property type="term" value="P:urea cycle"/>
    <property type="evidence" value="ECO:0007669"/>
    <property type="project" value="TreeGrafter"/>
</dbReference>
<dbReference type="CDD" id="cd01999">
    <property type="entry name" value="ASS"/>
    <property type="match status" value="1"/>
</dbReference>
<dbReference type="FunFam" id="3.40.50.620:FF:000019">
    <property type="entry name" value="Argininosuccinate synthase"/>
    <property type="match status" value="1"/>
</dbReference>
<dbReference type="FunFam" id="3.90.1260.10:FF:000007">
    <property type="entry name" value="Argininosuccinate synthase"/>
    <property type="match status" value="1"/>
</dbReference>
<dbReference type="Gene3D" id="3.90.1260.10">
    <property type="entry name" value="Argininosuccinate synthetase, chain A, domain 2"/>
    <property type="match status" value="1"/>
</dbReference>
<dbReference type="Gene3D" id="3.40.50.620">
    <property type="entry name" value="HUPs"/>
    <property type="match status" value="1"/>
</dbReference>
<dbReference type="Gene3D" id="1.20.5.470">
    <property type="entry name" value="Single helix bin"/>
    <property type="match status" value="1"/>
</dbReference>
<dbReference type="HAMAP" id="MF_00005">
    <property type="entry name" value="Arg_succ_synth_type1"/>
    <property type="match status" value="1"/>
</dbReference>
<dbReference type="InterPro" id="IPR048268">
    <property type="entry name" value="Arginosuc_syn_C"/>
</dbReference>
<dbReference type="InterPro" id="IPR048267">
    <property type="entry name" value="Arginosuc_syn_N"/>
</dbReference>
<dbReference type="InterPro" id="IPR001518">
    <property type="entry name" value="Arginosuc_synth"/>
</dbReference>
<dbReference type="InterPro" id="IPR018223">
    <property type="entry name" value="Arginosuc_synth_CS"/>
</dbReference>
<dbReference type="InterPro" id="IPR023434">
    <property type="entry name" value="Arginosuc_synth_type_1_subfam"/>
</dbReference>
<dbReference type="InterPro" id="IPR024074">
    <property type="entry name" value="AS_cat/multimer_dom_body"/>
</dbReference>
<dbReference type="InterPro" id="IPR014729">
    <property type="entry name" value="Rossmann-like_a/b/a_fold"/>
</dbReference>
<dbReference type="NCBIfam" id="TIGR00032">
    <property type="entry name" value="argG"/>
    <property type="match status" value="1"/>
</dbReference>
<dbReference type="NCBIfam" id="NF001770">
    <property type="entry name" value="PRK00509.1"/>
    <property type="match status" value="1"/>
</dbReference>
<dbReference type="PANTHER" id="PTHR11587">
    <property type="entry name" value="ARGININOSUCCINATE SYNTHASE"/>
    <property type="match status" value="1"/>
</dbReference>
<dbReference type="PANTHER" id="PTHR11587:SF2">
    <property type="entry name" value="ARGININOSUCCINATE SYNTHASE"/>
    <property type="match status" value="1"/>
</dbReference>
<dbReference type="Pfam" id="PF20979">
    <property type="entry name" value="Arginosuc_syn_C"/>
    <property type="match status" value="1"/>
</dbReference>
<dbReference type="Pfam" id="PF00764">
    <property type="entry name" value="Arginosuc_synth"/>
    <property type="match status" value="1"/>
</dbReference>
<dbReference type="SUPFAM" id="SSF52402">
    <property type="entry name" value="Adenine nucleotide alpha hydrolases-like"/>
    <property type="match status" value="1"/>
</dbReference>
<dbReference type="SUPFAM" id="SSF69864">
    <property type="entry name" value="Argininosuccinate synthetase, C-terminal domain"/>
    <property type="match status" value="1"/>
</dbReference>
<dbReference type="PROSITE" id="PS00564">
    <property type="entry name" value="ARGININOSUCCIN_SYN_1"/>
    <property type="match status" value="1"/>
</dbReference>
<dbReference type="PROSITE" id="PS00565">
    <property type="entry name" value="ARGININOSUCCIN_SYN_2"/>
    <property type="match status" value="1"/>
</dbReference>
<name>ASSY_CLOBB</name>
<feature type="chain" id="PRO_1000089030" description="Argininosuccinate synthase">
    <location>
        <begin position="1"/>
        <end position="407"/>
    </location>
</feature>
<feature type="binding site" evidence="1">
    <location>
        <begin position="10"/>
        <end position="18"/>
    </location>
    <ligand>
        <name>ATP</name>
        <dbReference type="ChEBI" id="CHEBI:30616"/>
    </ligand>
</feature>
<feature type="binding site" evidence="1">
    <location>
        <position position="88"/>
    </location>
    <ligand>
        <name>L-citrulline</name>
        <dbReference type="ChEBI" id="CHEBI:57743"/>
    </ligand>
</feature>
<feature type="binding site" evidence="1">
    <location>
        <position position="93"/>
    </location>
    <ligand>
        <name>L-citrulline</name>
        <dbReference type="ChEBI" id="CHEBI:57743"/>
    </ligand>
</feature>
<feature type="binding site" evidence="1">
    <location>
        <position position="118"/>
    </location>
    <ligand>
        <name>ATP</name>
        <dbReference type="ChEBI" id="CHEBI:30616"/>
    </ligand>
</feature>
<feature type="binding site" evidence="1">
    <location>
        <position position="120"/>
    </location>
    <ligand>
        <name>L-aspartate</name>
        <dbReference type="ChEBI" id="CHEBI:29991"/>
    </ligand>
</feature>
<feature type="binding site" evidence="1">
    <location>
        <position position="124"/>
    </location>
    <ligand>
        <name>L-aspartate</name>
        <dbReference type="ChEBI" id="CHEBI:29991"/>
    </ligand>
</feature>
<feature type="binding site" evidence="1">
    <location>
        <position position="124"/>
    </location>
    <ligand>
        <name>L-citrulline</name>
        <dbReference type="ChEBI" id="CHEBI:57743"/>
    </ligand>
</feature>
<feature type="binding site" evidence="1">
    <location>
        <position position="125"/>
    </location>
    <ligand>
        <name>L-aspartate</name>
        <dbReference type="ChEBI" id="CHEBI:29991"/>
    </ligand>
</feature>
<feature type="binding site" evidence="1">
    <location>
        <position position="128"/>
    </location>
    <ligand>
        <name>L-citrulline</name>
        <dbReference type="ChEBI" id="CHEBI:57743"/>
    </ligand>
</feature>
<feature type="binding site" evidence="1">
    <location>
        <position position="177"/>
    </location>
    <ligand>
        <name>L-citrulline</name>
        <dbReference type="ChEBI" id="CHEBI:57743"/>
    </ligand>
</feature>
<feature type="binding site" evidence="1">
    <location>
        <position position="186"/>
    </location>
    <ligand>
        <name>L-citrulline</name>
        <dbReference type="ChEBI" id="CHEBI:57743"/>
    </ligand>
</feature>
<feature type="binding site" evidence="1">
    <location>
        <position position="263"/>
    </location>
    <ligand>
        <name>L-citrulline</name>
        <dbReference type="ChEBI" id="CHEBI:57743"/>
    </ligand>
</feature>
<feature type="binding site" evidence="1">
    <location>
        <position position="275"/>
    </location>
    <ligand>
        <name>L-citrulline</name>
        <dbReference type="ChEBI" id="CHEBI:57743"/>
    </ligand>
</feature>
<reference key="1">
    <citation type="submission" date="2008-04" db="EMBL/GenBank/DDBJ databases">
        <title>Complete sequence of Clostridium botulinum strain Eklund.</title>
        <authorList>
            <person name="Brinkac L.M."/>
            <person name="Brown J.L."/>
            <person name="Bruce D."/>
            <person name="Detter C."/>
            <person name="Munk C."/>
            <person name="Smith L.A."/>
            <person name="Smith T.J."/>
            <person name="Sutton G."/>
            <person name="Brettin T.S."/>
        </authorList>
    </citation>
    <scope>NUCLEOTIDE SEQUENCE [LARGE SCALE GENOMIC DNA]</scope>
    <source>
        <strain>Eklund 17B / Type B</strain>
    </source>
</reference>
<keyword id="KW-0028">Amino-acid biosynthesis</keyword>
<keyword id="KW-0055">Arginine biosynthesis</keyword>
<keyword id="KW-0067">ATP-binding</keyword>
<keyword id="KW-0963">Cytoplasm</keyword>
<keyword id="KW-0436">Ligase</keyword>
<keyword id="KW-0547">Nucleotide-binding</keyword>
<sequence>MNKLNKVILAYSGGLDTSIIIPWLKENYNCEVIAVCGNVGQKDELDGLEEKAIKTGASKLYIEDLTKEFVEDYIFPTIQAGAIYEGKYLLGTSFARPLIGKRLVEIAKAEGADAICHGCTGKGNDQVRFELAVKAFDPDMKIIAPWRIWDIKSREDEIAYAEARNVPIKINHETNYSKDKNIWHLSHEGLDLEDPKNEPKYDEILELSNSLEKAPNEPTYITLTFEKGNAVALNGEKMDAVTLLDELNKIGGKNAIGITDMVENRLVGMKSRGVYETPGGTILYKAHKDLEELCLDKETSHYKEQISLKFADLVYNGLWFTPLREALSEFIKKTQETVTGEIKLKLYKGNIVNAGMTSPYSLYSEEYATFGEDAVYNQNDSAGFITLYGLPTVVKAKMYQSLKKGTK</sequence>
<organism>
    <name type="scientific">Clostridium botulinum (strain Eklund 17B / Type B)</name>
    <dbReference type="NCBI Taxonomy" id="935198"/>
    <lineage>
        <taxon>Bacteria</taxon>
        <taxon>Bacillati</taxon>
        <taxon>Bacillota</taxon>
        <taxon>Clostridia</taxon>
        <taxon>Eubacteriales</taxon>
        <taxon>Clostridiaceae</taxon>
        <taxon>Clostridium</taxon>
    </lineage>
</organism>
<proteinExistence type="inferred from homology"/>
<protein>
    <recommendedName>
        <fullName evidence="1">Argininosuccinate synthase</fullName>
        <ecNumber evidence="1">6.3.4.5</ecNumber>
    </recommendedName>
    <alternativeName>
        <fullName evidence="1">Citrulline--aspartate ligase</fullName>
    </alternativeName>
</protein>
<gene>
    <name evidence="1" type="primary">argG</name>
    <name type="ordered locus">CLL_A3114</name>
</gene>
<comment type="catalytic activity">
    <reaction evidence="1">
        <text>L-citrulline + L-aspartate + ATP = 2-(N(omega)-L-arginino)succinate + AMP + diphosphate + H(+)</text>
        <dbReference type="Rhea" id="RHEA:10932"/>
        <dbReference type="ChEBI" id="CHEBI:15378"/>
        <dbReference type="ChEBI" id="CHEBI:29991"/>
        <dbReference type="ChEBI" id="CHEBI:30616"/>
        <dbReference type="ChEBI" id="CHEBI:33019"/>
        <dbReference type="ChEBI" id="CHEBI:57472"/>
        <dbReference type="ChEBI" id="CHEBI:57743"/>
        <dbReference type="ChEBI" id="CHEBI:456215"/>
        <dbReference type="EC" id="6.3.4.5"/>
    </reaction>
</comment>
<comment type="pathway">
    <text evidence="1">Amino-acid biosynthesis; L-arginine biosynthesis; L-arginine from L-ornithine and carbamoyl phosphate: step 2/3.</text>
</comment>
<comment type="subunit">
    <text evidence="1">Homotetramer.</text>
</comment>
<comment type="subcellular location">
    <subcellularLocation>
        <location evidence="1">Cytoplasm</location>
    </subcellularLocation>
</comment>
<comment type="similarity">
    <text evidence="1">Belongs to the argininosuccinate synthase family. Type 1 subfamily.</text>
</comment>